<accession>B2K7H7</accession>
<proteinExistence type="inferred from homology"/>
<comment type="function">
    <text evidence="1">Necessary for formate dehydrogenase activity.</text>
</comment>
<comment type="subcellular location">
    <subcellularLocation>
        <location evidence="1">Cytoplasm</location>
    </subcellularLocation>
</comment>
<comment type="similarity">
    <text evidence="1">Belongs to the FdhE family.</text>
</comment>
<gene>
    <name evidence="1" type="primary">fdhE</name>
    <name type="ordered locus">YPTS_4153</name>
</gene>
<dbReference type="EMBL" id="CP001048">
    <property type="protein sequence ID" value="ACC91099.1"/>
    <property type="molecule type" value="Genomic_DNA"/>
</dbReference>
<dbReference type="RefSeq" id="WP_002209609.1">
    <property type="nucleotide sequence ID" value="NZ_CP009780.1"/>
</dbReference>
<dbReference type="SMR" id="B2K7H7"/>
<dbReference type="GeneID" id="57974659"/>
<dbReference type="KEGG" id="ypb:YPTS_4153"/>
<dbReference type="PATRIC" id="fig|502801.10.peg.3626"/>
<dbReference type="GO" id="GO:0005829">
    <property type="term" value="C:cytosol"/>
    <property type="evidence" value="ECO:0007669"/>
    <property type="project" value="TreeGrafter"/>
</dbReference>
<dbReference type="GO" id="GO:0008199">
    <property type="term" value="F:ferric iron binding"/>
    <property type="evidence" value="ECO:0007669"/>
    <property type="project" value="TreeGrafter"/>
</dbReference>
<dbReference type="GO" id="GO:0051604">
    <property type="term" value="P:protein maturation"/>
    <property type="evidence" value="ECO:0007669"/>
    <property type="project" value="TreeGrafter"/>
</dbReference>
<dbReference type="CDD" id="cd16341">
    <property type="entry name" value="FdhE"/>
    <property type="match status" value="1"/>
</dbReference>
<dbReference type="FunFam" id="3.90.1670.10:FF:000001">
    <property type="entry name" value="Protein FdhE"/>
    <property type="match status" value="1"/>
</dbReference>
<dbReference type="Gene3D" id="3.90.1670.10">
    <property type="entry name" value="FdhE-like domain"/>
    <property type="match status" value="1"/>
</dbReference>
<dbReference type="HAMAP" id="MF_00611">
    <property type="entry name" value="FdeH"/>
    <property type="match status" value="1"/>
</dbReference>
<dbReference type="InterPro" id="IPR024064">
    <property type="entry name" value="FdhE-like_sf"/>
</dbReference>
<dbReference type="InterPro" id="IPR056796">
    <property type="entry name" value="FdhE_C"/>
</dbReference>
<dbReference type="InterPro" id="IPR056797">
    <property type="entry name" value="FdhE_central"/>
</dbReference>
<dbReference type="InterPro" id="IPR056774">
    <property type="entry name" value="FdhE_N"/>
</dbReference>
<dbReference type="InterPro" id="IPR006452">
    <property type="entry name" value="Formate_DH_accessory"/>
</dbReference>
<dbReference type="NCBIfam" id="TIGR01562">
    <property type="entry name" value="FdhE"/>
    <property type="match status" value="1"/>
</dbReference>
<dbReference type="NCBIfam" id="NF002925">
    <property type="entry name" value="PRK03564.1"/>
    <property type="match status" value="1"/>
</dbReference>
<dbReference type="PANTHER" id="PTHR37689">
    <property type="entry name" value="PROTEIN FDHE"/>
    <property type="match status" value="1"/>
</dbReference>
<dbReference type="PANTHER" id="PTHR37689:SF1">
    <property type="entry name" value="PROTEIN FDHE"/>
    <property type="match status" value="1"/>
</dbReference>
<dbReference type="Pfam" id="PF24860">
    <property type="entry name" value="FdhE_C"/>
    <property type="match status" value="1"/>
</dbReference>
<dbReference type="Pfam" id="PF24859">
    <property type="entry name" value="FdhE_central"/>
    <property type="match status" value="1"/>
</dbReference>
<dbReference type="Pfam" id="PF04216">
    <property type="entry name" value="FdhE_N"/>
    <property type="match status" value="1"/>
</dbReference>
<dbReference type="PIRSF" id="PIRSF018296">
    <property type="entry name" value="Format_dh_formtn"/>
    <property type="match status" value="1"/>
</dbReference>
<dbReference type="SUPFAM" id="SSF144020">
    <property type="entry name" value="FdhE-like"/>
    <property type="match status" value="1"/>
</dbReference>
<reference key="1">
    <citation type="submission" date="2008-04" db="EMBL/GenBank/DDBJ databases">
        <title>Complete sequence of Yersinia pseudotuberculosis PB1/+.</title>
        <authorList>
            <person name="Copeland A."/>
            <person name="Lucas S."/>
            <person name="Lapidus A."/>
            <person name="Glavina del Rio T."/>
            <person name="Dalin E."/>
            <person name="Tice H."/>
            <person name="Bruce D."/>
            <person name="Goodwin L."/>
            <person name="Pitluck S."/>
            <person name="Munk A.C."/>
            <person name="Brettin T."/>
            <person name="Detter J.C."/>
            <person name="Han C."/>
            <person name="Tapia R."/>
            <person name="Schmutz J."/>
            <person name="Larimer F."/>
            <person name="Land M."/>
            <person name="Hauser L."/>
            <person name="Challacombe J.F."/>
            <person name="Green L."/>
            <person name="Lindler L.E."/>
            <person name="Nikolich M.P."/>
            <person name="Richardson P."/>
        </authorList>
    </citation>
    <scope>NUCLEOTIDE SEQUENCE [LARGE SCALE GENOMIC DNA]</scope>
    <source>
        <strain>PB1/+</strain>
    </source>
</reference>
<sequence>MSIRIVPKDQLGKQREKGTTAGNIPPLLFANLKSLYTRRTERLQQLALDNPLADYLDFAAKITEAQQKALHDHPLVLDMQAELVQSAASGKPPLDGSVFPRTEHWRKLLSALIAELRHDAPDHILAVLDNLDKASVHELELYADALLNRDFSQVGSEKAPFIWAALSLYWAQMASQIPGKARAEYGEHRQFCPVCGSIPVSSVVHIGTHNGLRYLHCNLCESEWHVVRIKCSNCEQTRDLNYWSLDSELAAVKAESCGDCGTYLKILYQEKDPQVEAVADDLASLILDAKMEGEGFARSSINPFLFPGE</sequence>
<protein>
    <recommendedName>
        <fullName evidence="1">Protein FdhE homolog</fullName>
    </recommendedName>
</protein>
<keyword id="KW-0963">Cytoplasm</keyword>
<feature type="chain" id="PRO_1000130375" description="Protein FdhE homolog">
    <location>
        <begin position="1"/>
        <end position="309"/>
    </location>
</feature>
<evidence type="ECO:0000255" key="1">
    <source>
        <dbReference type="HAMAP-Rule" id="MF_00611"/>
    </source>
</evidence>
<organism>
    <name type="scientific">Yersinia pseudotuberculosis serotype IB (strain PB1/+)</name>
    <dbReference type="NCBI Taxonomy" id="502801"/>
    <lineage>
        <taxon>Bacteria</taxon>
        <taxon>Pseudomonadati</taxon>
        <taxon>Pseudomonadota</taxon>
        <taxon>Gammaproteobacteria</taxon>
        <taxon>Enterobacterales</taxon>
        <taxon>Yersiniaceae</taxon>
        <taxon>Yersinia</taxon>
    </lineage>
</organism>
<name>FDHE_YERPB</name>